<evidence type="ECO:0000255" key="1">
    <source>
        <dbReference type="HAMAP-Rule" id="MF_01652"/>
    </source>
</evidence>
<evidence type="ECO:0000305" key="2"/>
<sequence length="562" mass="61387">MNSPGAVDVVIVGAGPVGLTLANILGGQGVRTLIIEERETLIDYPRGVGLDDESLRTFQSIGLVDAILPHTVPNQILRFYDANRRLLAEMAPPDARFGWPKRNGFVQPMVDAELLAGLDRFDHVEVMWGRRMQTIAEDADGVTVEVSGPDGPASVHAQYVVGCDGGRSATRHLMGVSFDGTTSSTRWVVIDLANDPLGHPNSEVGADPQRPYASISIAHGIRRFEFMIHADETDEQAEDPEFVAELLRPFVPHPDRVDVIRRRVYTHHSRIAGSFRKGRMLLAGDAAHLMPVWQGQGYNSGIRDAFNLGWKLAAVVRGQAGDALLDTYDAERRKHARAMIDLSTMVGRVISPTNRKVAALRDKLIRGASIVPTLKRYVLEMRFKPMPRYHEGAVYHAKPPTPASPVGTLFIQPRVDTREQDNVLLDDVLGTGFAVLCWNNNPRTLLGEAAFTRWKALGATFIAARPSTQLHWTKDDDPDVVIVGDRTGALKAFFDAHTESVLVLRPDRCIAGADIAQRAPELSTALFGILHLRQGGENGATGPVLYVPQPTAESSGTVGRAS</sequence>
<proteinExistence type="inferred from homology"/>
<gene>
    <name evidence="1" type="primary">mhpA</name>
    <name type="ordered locus">MSMEG_4866</name>
    <name type="ordered locus">MSMEI_4741</name>
</gene>
<comment type="function">
    <text evidence="1">Catalyzes the insertion of one atom of molecular oxygen into position 2 of the phenyl ring of 3-(3-hydroxyphenyl)propionate (3-HPP) and hydroxycinnamic acid (3HCI).</text>
</comment>
<comment type="catalytic activity">
    <reaction evidence="1">
        <text>3-(3-hydroxyphenyl)propanoate + NADH + O2 + H(+) = 3-(2,3-dihydroxyphenyl)propanoate + NAD(+) + H2O</text>
        <dbReference type="Rhea" id="RHEA:24785"/>
        <dbReference type="ChEBI" id="CHEBI:15377"/>
        <dbReference type="ChEBI" id="CHEBI:15378"/>
        <dbReference type="ChEBI" id="CHEBI:15379"/>
        <dbReference type="ChEBI" id="CHEBI:46951"/>
        <dbReference type="ChEBI" id="CHEBI:57277"/>
        <dbReference type="ChEBI" id="CHEBI:57540"/>
        <dbReference type="ChEBI" id="CHEBI:57945"/>
        <dbReference type="EC" id="1.14.13.127"/>
    </reaction>
</comment>
<comment type="catalytic activity">
    <reaction evidence="1">
        <text>(2E)-3-(3-hydroxyphenyl)prop-2-enoate + NADH + O2 + H(+) = (2E)-3-(2,3-dihydroxyphenyl)prop-2-enoate + NAD(+) + H2O</text>
        <dbReference type="Rhea" id="RHEA:27846"/>
        <dbReference type="ChEBI" id="CHEBI:15377"/>
        <dbReference type="ChEBI" id="CHEBI:15378"/>
        <dbReference type="ChEBI" id="CHEBI:15379"/>
        <dbReference type="ChEBI" id="CHEBI:47928"/>
        <dbReference type="ChEBI" id="CHEBI:57540"/>
        <dbReference type="ChEBI" id="CHEBI:57945"/>
        <dbReference type="ChEBI" id="CHEBI:58642"/>
        <dbReference type="EC" id="1.14.13.127"/>
    </reaction>
</comment>
<comment type="cofactor">
    <cofactor evidence="1">
        <name>FAD</name>
        <dbReference type="ChEBI" id="CHEBI:57692"/>
    </cofactor>
</comment>
<comment type="pathway">
    <text evidence="1">Aromatic compound metabolism; 3-phenylpropanoate degradation.</text>
</comment>
<comment type="similarity">
    <text evidence="1">Belongs to the PheA/TfdB FAD monooxygenase family.</text>
</comment>
<comment type="sequence caution" evidence="2">
    <conflict type="erroneous initiation">
        <sequence resource="EMBL-CDS" id="ABK72149"/>
    </conflict>
</comment>
<accession>A0R1T4</accession>
<accession>I7FIJ0</accession>
<protein>
    <recommendedName>
        <fullName evidence="1">3-(3-hydroxy-phenyl)propionate/3-hydroxycinnamic acid hydroxylase</fullName>
        <shortName evidence="1">3-HCI hydroxylase</shortName>
        <shortName evidence="1">3-HPP hydroxylase</shortName>
        <ecNumber evidence="1">1.14.13.127</ecNumber>
    </recommendedName>
    <alternativeName>
        <fullName>Flavin-type monooxygenase</fullName>
    </alternativeName>
</protein>
<organism>
    <name type="scientific">Mycolicibacterium smegmatis (strain ATCC 700084 / mc(2)155)</name>
    <name type="common">Mycobacterium smegmatis</name>
    <dbReference type="NCBI Taxonomy" id="246196"/>
    <lineage>
        <taxon>Bacteria</taxon>
        <taxon>Bacillati</taxon>
        <taxon>Actinomycetota</taxon>
        <taxon>Actinomycetes</taxon>
        <taxon>Mycobacteriales</taxon>
        <taxon>Mycobacteriaceae</taxon>
        <taxon>Mycolicibacterium</taxon>
    </lineage>
</organism>
<feature type="chain" id="PRO_0000337637" description="3-(3-hydroxy-phenyl)propionate/3-hydroxycinnamic acid hydroxylase">
    <location>
        <begin position="1"/>
        <end position="562"/>
    </location>
</feature>
<feature type="binding site" evidence="1">
    <location>
        <begin position="8"/>
        <end position="37"/>
    </location>
    <ligand>
        <name>FAD</name>
        <dbReference type="ChEBI" id="CHEBI:57692"/>
    </ligand>
</feature>
<feature type="binding site" evidence="1">
    <location>
        <begin position="275"/>
        <end position="285"/>
    </location>
    <ligand>
        <name>FAD</name>
        <dbReference type="ChEBI" id="CHEBI:57692"/>
    </ligand>
</feature>
<dbReference type="EC" id="1.14.13.127" evidence="1"/>
<dbReference type="EMBL" id="CP000480">
    <property type="protein sequence ID" value="ABK72149.1"/>
    <property type="status" value="ALT_INIT"/>
    <property type="molecule type" value="Genomic_DNA"/>
</dbReference>
<dbReference type="EMBL" id="CP001663">
    <property type="protein sequence ID" value="AFP41190.1"/>
    <property type="molecule type" value="Genomic_DNA"/>
</dbReference>
<dbReference type="RefSeq" id="WP_014878169.1">
    <property type="nucleotide sequence ID" value="NZ_SIJM01000024.1"/>
</dbReference>
<dbReference type="RefSeq" id="YP_889122.1">
    <property type="nucleotide sequence ID" value="NC_008596.1"/>
</dbReference>
<dbReference type="SMR" id="A0R1T4"/>
<dbReference type="STRING" id="246196.MSMEG_4866"/>
<dbReference type="PaxDb" id="246196-MSMEI_4741"/>
<dbReference type="KEGG" id="msb:LJ00_24065"/>
<dbReference type="KEGG" id="msg:MSMEI_4741"/>
<dbReference type="KEGG" id="msm:MSMEG_4866"/>
<dbReference type="PATRIC" id="fig|246196.19.peg.4748"/>
<dbReference type="eggNOG" id="COG0654">
    <property type="taxonomic scope" value="Bacteria"/>
</dbReference>
<dbReference type="OrthoDB" id="8670884at2"/>
<dbReference type="UniPathway" id="UPA00714"/>
<dbReference type="Proteomes" id="UP000000757">
    <property type="component" value="Chromosome"/>
</dbReference>
<dbReference type="Proteomes" id="UP000006158">
    <property type="component" value="Chromosome"/>
</dbReference>
<dbReference type="GO" id="GO:0008688">
    <property type="term" value="F:3-(3-hydroxyphenyl)propionate hydroxylase activity"/>
    <property type="evidence" value="ECO:0007669"/>
    <property type="project" value="UniProtKB-UniRule"/>
</dbReference>
<dbReference type="GO" id="GO:0071949">
    <property type="term" value="F:FAD binding"/>
    <property type="evidence" value="ECO:0007669"/>
    <property type="project" value="InterPro"/>
</dbReference>
<dbReference type="GO" id="GO:0019622">
    <property type="term" value="P:3-(3-hydroxy)phenylpropionate catabolic process"/>
    <property type="evidence" value="ECO:0007669"/>
    <property type="project" value="UniProtKB-UniRule"/>
</dbReference>
<dbReference type="GO" id="GO:0019380">
    <property type="term" value="P:3-phenylpropionate catabolic process"/>
    <property type="evidence" value="ECO:0007669"/>
    <property type="project" value="UniProtKB-UniPathway"/>
</dbReference>
<dbReference type="Gene3D" id="3.30.70.2450">
    <property type="match status" value="1"/>
</dbReference>
<dbReference type="Gene3D" id="3.50.50.60">
    <property type="entry name" value="FAD/NAD(P)-binding domain"/>
    <property type="match status" value="1"/>
</dbReference>
<dbReference type="HAMAP" id="MF_01652">
    <property type="entry name" value="MhpA"/>
    <property type="match status" value="1"/>
</dbReference>
<dbReference type="InterPro" id="IPR023786">
    <property type="entry name" value="3-HPP/3HCI_hydroxylase"/>
</dbReference>
<dbReference type="InterPro" id="IPR002938">
    <property type="entry name" value="FAD-bd"/>
</dbReference>
<dbReference type="InterPro" id="IPR036188">
    <property type="entry name" value="FAD/NAD-bd_sf"/>
</dbReference>
<dbReference type="InterPro" id="IPR050631">
    <property type="entry name" value="PheA/TfdB_FAD_monoxygenase"/>
</dbReference>
<dbReference type="NCBIfam" id="NF004828">
    <property type="entry name" value="PRK06183.1-2"/>
    <property type="match status" value="1"/>
</dbReference>
<dbReference type="NCBIfam" id="NF004829">
    <property type="entry name" value="PRK06183.1-3"/>
    <property type="match status" value="1"/>
</dbReference>
<dbReference type="NCBIfam" id="NF004831">
    <property type="entry name" value="PRK06183.1-5"/>
    <property type="match status" value="1"/>
</dbReference>
<dbReference type="PANTHER" id="PTHR43476">
    <property type="entry name" value="3-(3-HYDROXY-PHENYL)PROPIONATE/3-HYDROXYCINNAMIC ACID HYDROXYLASE"/>
    <property type="match status" value="1"/>
</dbReference>
<dbReference type="PANTHER" id="PTHR43476:SF3">
    <property type="entry name" value="FAD-BINDING MONOOXYGENASE"/>
    <property type="match status" value="1"/>
</dbReference>
<dbReference type="Pfam" id="PF01494">
    <property type="entry name" value="FAD_binding_3"/>
    <property type="match status" value="1"/>
</dbReference>
<dbReference type="PRINTS" id="PR00420">
    <property type="entry name" value="RNGMNOXGNASE"/>
</dbReference>
<dbReference type="SUPFAM" id="SSF51905">
    <property type="entry name" value="FAD/NAD(P)-binding domain"/>
    <property type="match status" value="1"/>
</dbReference>
<reference key="1">
    <citation type="submission" date="2006-10" db="EMBL/GenBank/DDBJ databases">
        <authorList>
            <person name="Fleischmann R.D."/>
            <person name="Dodson R.J."/>
            <person name="Haft D.H."/>
            <person name="Merkel J.S."/>
            <person name="Nelson W.C."/>
            <person name="Fraser C.M."/>
        </authorList>
    </citation>
    <scope>NUCLEOTIDE SEQUENCE [LARGE SCALE GENOMIC DNA]</scope>
    <source>
        <strain>ATCC 700084 / mc(2)155</strain>
    </source>
</reference>
<reference key="2">
    <citation type="journal article" date="2007" name="Genome Biol.">
        <title>Interrupted coding sequences in Mycobacterium smegmatis: authentic mutations or sequencing errors?</title>
        <authorList>
            <person name="Deshayes C."/>
            <person name="Perrodou E."/>
            <person name="Gallien S."/>
            <person name="Euphrasie D."/>
            <person name="Schaeffer C."/>
            <person name="Van-Dorsselaer A."/>
            <person name="Poch O."/>
            <person name="Lecompte O."/>
            <person name="Reyrat J.-M."/>
        </authorList>
    </citation>
    <scope>NUCLEOTIDE SEQUENCE [LARGE SCALE GENOMIC DNA]</scope>
    <source>
        <strain>ATCC 700084 / mc(2)155</strain>
    </source>
</reference>
<reference key="3">
    <citation type="journal article" date="2009" name="Genome Res.">
        <title>Ortho-proteogenomics: multiple proteomes investigation through orthology and a new MS-based protocol.</title>
        <authorList>
            <person name="Gallien S."/>
            <person name="Perrodou E."/>
            <person name="Carapito C."/>
            <person name="Deshayes C."/>
            <person name="Reyrat J.-M."/>
            <person name="Van Dorsselaer A."/>
            <person name="Poch O."/>
            <person name="Schaeffer C."/>
            <person name="Lecompte O."/>
        </authorList>
    </citation>
    <scope>NUCLEOTIDE SEQUENCE [LARGE SCALE GENOMIC DNA]</scope>
    <source>
        <strain>ATCC 700084 / mc(2)155</strain>
    </source>
</reference>
<keyword id="KW-0058">Aromatic hydrocarbons catabolism</keyword>
<keyword id="KW-0274">FAD</keyword>
<keyword id="KW-0285">Flavoprotein</keyword>
<keyword id="KW-0520">NAD</keyword>
<keyword id="KW-0560">Oxidoreductase</keyword>
<keyword id="KW-1185">Reference proteome</keyword>
<name>MHPA_MYCS2</name>